<reference key="1">
    <citation type="journal article" date="1986" name="Nature">
        <title>Chloroplast gene organization deduced from complete sequence of liverwort Marchantia polymorpha chloroplast DNA.</title>
        <authorList>
            <person name="Ohyama K."/>
            <person name="Fukuzawa H."/>
            <person name="Kohchi T."/>
            <person name="Shirai H."/>
            <person name="Sano T."/>
            <person name="Sano S."/>
            <person name="Umesono K."/>
            <person name="Shiki Y."/>
            <person name="Takeuchi M."/>
            <person name="Chang Z."/>
            <person name="Aota S."/>
            <person name="Inokuchi H."/>
            <person name="Ozeki H."/>
        </authorList>
    </citation>
    <scope>NUCLEOTIDE SEQUENCE [LARGE SCALE GENOMIC DNA]</scope>
</reference>
<reference key="2">
    <citation type="journal article" date="1988" name="J. Mol. Biol.">
        <title>Structure and organization of Marchantia polymorpha chloroplast genome. II. Gene organization of the large single copy region from rps'12 to atpB.</title>
        <authorList>
            <person name="Umesono K."/>
            <person name="Inokuchi H."/>
            <person name="Shiki Y."/>
            <person name="Takeuchi M."/>
            <person name="Chang Z."/>
            <person name="Fukuzawa H."/>
            <person name="Kohchi T."/>
            <person name="Shirai H."/>
            <person name="Ohyama K."/>
            <person name="Ozeki H."/>
        </authorList>
    </citation>
    <scope>NUCLEOTIDE SEQUENCE [GENOMIC DNA]</scope>
</reference>
<feature type="chain" id="PRO_0000112192" description="ATP synthase subunit c, chloroplastic">
    <location>
        <begin position="1"/>
        <end position="81"/>
    </location>
</feature>
<feature type="transmembrane region" description="Helical" evidence="1">
    <location>
        <begin position="7"/>
        <end position="27"/>
    </location>
</feature>
<feature type="transmembrane region" description="Helical" evidence="1">
    <location>
        <begin position="57"/>
        <end position="77"/>
    </location>
</feature>
<feature type="site" description="Reversibly protonated during proton transport" evidence="1">
    <location>
        <position position="61"/>
    </location>
</feature>
<accession>P62481</accession>
<accession>P06287</accession>
<gene>
    <name evidence="1" type="primary">atpH</name>
</gene>
<name>ATPH_MARPO</name>
<organism>
    <name type="scientific">Marchantia polymorpha</name>
    <name type="common">Common liverwort</name>
    <name type="synonym">Marchantia aquatica</name>
    <dbReference type="NCBI Taxonomy" id="3197"/>
    <lineage>
        <taxon>Eukaryota</taxon>
        <taxon>Viridiplantae</taxon>
        <taxon>Streptophyta</taxon>
        <taxon>Embryophyta</taxon>
        <taxon>Marchantiophyta</taxon>
        <taxon>Marchantiopsida</taxon>
        <taxon>Marchantiidae</taxon>
        <taxon>Marchantiales</taxon>
        <taxon>Marchantiaceae</taxon>
        <taxon>Marchantia</taxon>
    </lineage>
</organism>
<protein>
    <recommendedName>
        <fullName evidence="1">ATP synthase subunit c, chloroplastic</fullName>
    </recommendedName>
    <alternativeName>
        <fullName evidence="1">ATP synthase F(0) sector subunit c</fullName>
    </alternativeName>
    <alternativeName>
        <fullName evidence="1">ATPase subunit III</fullName>
    </alternativeName>
    <alternativeName>
        <fullName evidence="1">F-type ATPase subunit c</fullName>
        <shortName evidence="1">F-ATPase subunit c</shortName>
    </alternativeName>
    <alternativeName>
        <fullName evidence="1">Lipid-binding protein</fullName>
    </alternativeName>
</protein>
<keyword id="KW-0066">ATP synthesis</keyword>
<keyword id="KW-0138">CF(0)</keyword>
<keyword id="KW-0150">Chloroplast</keyword>
<keyword id="KW-0375">Hydrogen ion transport</keyword>
<keyword id="KW-0406">Ion transport</keyword>
<keyword id="KW-0446">Lipid-binding</keyword>
<keyword id="KW-0472">Membrane</keyword>
<keyword id="KW-0934">Plastid</keyword>
<keyword id="KW-0793">Thylakoid</keyword>
<keyword id="KW-0812">Transmembrane</keyword>
<keyword id="KW-1133">Transmembrane helix</keyword>
<keyword id="KW-0813">Transport</keyword>
<proteinExistence type="inferred from homology"/>
<geneLocation type="chloroplast"/>
<sequence length="81" mass="8004">MNPLISAASVIAAGLAVGLASIGPGIGQGTAAGQAVEGIARQPEAEGKIRGTLLLSLAFMEALTIYGLVVALALLFANPFV</sequence>
<evidence type="ECO:0000255" key="1">
    <source>
        <dbReference type="HAMAP-Rule" id="MF_01396"/>
    </source>
</evidence>
<comment type="function">
    <text evidence="1">F(1)F(0) ATP synthase produces ATP from ADP in the presence of a proton or sodium gradient. F-type ATPases consist of two structural domains, F(1) containing the extramembraneous catalytic core and F(0) containing the membrane proton channel, linked together by a central stalk and a peripheral stalk. During catalysis, ATP synthesis in the catalytic domain of F(1) is coupled via a rotary mechanism of the central stalk subunits to proton translocation.</text>
</comment>
<comment type="function">
    <text evidence="1">Key component of the F(0) channel; it plays a direct role in translocation across the membrane. A homomeric c-ring of between 10-14 subunits forms the central stalk rotor element with the F(1) delta and epsilon subunits.</text>
</comment>
<comment type="subunit">
    <text evidence="1">F-type ATPases have 2 components, F(1) - the catalytic core - and F(0) - the membrane proton channel. F(1) has five subunits: alpha(3), beta(3), gamma(1), delta(1), epsilon(1). F(0) has four main subunits: a(1), b(1), b'(1) and c(10-14). The alpha and beta chains form an alternating ring which encloses part of the gamma chain. F(1) is attached to F(0) by a central stalk formed by the gamma and epsilon chains, while a peripheral stalk is formed by the delta, b and b' chains.</text>
</comment>
<comment type="subcellular location">
    <subcellularLocation>
        <location evidence="1">Plastid</location>
        <location evidence="1">Chloroplast thylakoid membrane</location>
        <topology evidence="1">Multi-pass membrane protein</topology>
    </subcellularLocation>
</comment>
<comment type="miscellaneous">
    <text>In plastids the F-type ATPase is also known as CF(1)CF(0).</text>
</comment>
<comment type="similarity">
    <text evidence="1">Belongs to the ATPase C chain family.</text>
</comment>
<dbReference type="EMBL" id="X04465">
    <property type="protein sequence ID" value="CAA28066.1"/>
    <property type="molecule type" value="Genomic_DNA"/>
</dbReference>
<dbReference type="PIR" id="A01046">
    <property type="entry name" value="LWLVA"/>
</dbReference>
<dbReference type="RefSeq" id="NP_039280.1">
    <property type="nucleotide sequence ID" value="NC_001319.1"/>
</dbReference>
<dbReference type="RefSeq" id="YP_009646797.1">
    <property type="nucleotide sequence ID" value="NC_042505.1"/>
</dbReference>
<dbReference type="SMR" id="P62481"/>
<dbReference type="GeneID" id="2702538"/>
<dbReference type="GeneID" id="40386708"/>
<dbReference type="GO" id="GO:0009535">
    <property type="term" value="C:chloroplast thylakoid membrane"/>
    <property type="evidence" value="ECO:0007669"/>
    <property type="project" value="UniProtKB-SubCell"/>
</dbReference>
<dbReference type="GO" id="GO:0045259">
    <property type="term" value="C:proton-transporting ATP synthase complex"/>
    <property type="evidence" value="ECO:0007669"/>
    <property type="project" value="UniProtKB-KW"/>
</dbReference>
<dbReference type="GO" id="GO:0033177">
    <property type="term" value="C:proton-transporting two-sector ATPase complex, proton-transporting domain"/>
    <property type="evidence" value="ECO:0007669"/>
    <property type="project" value="InterPro"/>
</dbReference>
<dbReference type="GO" id="GO:0008289">
    <property type="term" value="F:lipid binding"/>
    <property type="evidence" value="ECO:0007669"/>
    <property type="project" value="UniProtKB-KW"/>
</dbReference>
<dbReference type="GO" id="GO:0046933">
    <property type="term" value="F:proton-transporting ATP synthase activity, rotational mechanism"/>
    <property type="evidence" value="ECO:0007669"/>
    <property type="project" value="UniProtKB-UniRule"/>
</dbReference>
<dbReference type="CDD" id="cd18183">
    <property type="entry name" value="ATP-synt_Fo_c_ATPH"/>
    <property type="match status" value="1"/>
</dbReference>
<dbReference type="FunFam" id="1.20.20.10:FF:000001">
    <property type="entry name" value="ATP synthase subunit c, chloroplastic"/>
    <property type="match status" value="1"/>
</dbReference>
<dbReference type="Gene3D" id="1.20.20.10">
    <property type="entry name" value="F1F0 ATP synthase subunit C"/>
    <property type="match status" value="1"/>
</dbReference>
<dbReference type="HAMAP" id="MF_01396">
    <property type="entry name" value="ATP_synth_c_bact"/>
    <property type="match status" value="1"/>
</dbReference>
<dbReference type="InterPro" id="IPR005953">
    <property type="entry name" value="ATP_synth_csu_bac/chlpt"/>
</dbReference>
<dbReference type="InterPro" id="IPR000454">
    <property type="entry name" value="ATP_synth_F0_csu"/>
</dbReference>
<dbReference type="InterPro" id="IPR020537">
    <property type="entry name" value="ATP_synth_F0_csu_DDCD_BS"/>
</dbReference>
<dbReference type="InterPro" id="IPR038662">
    <property type="entry name" value="ATP_synth_F0_csu_sf"/>
</dbReference>
<dbReference type="InterPro" id="IPR002379">
    <property type="entry name" value="ATPase_proteolipid_c-like_dom"/>
</dbReference>
<dbReference type="InterPro" id="IPR035921">
    <property type="entry name" value="F/V-ATP_Csub_sf"/>
</dbReference>
<dbReference type="NCBIfam" id="TIGR01260">
    <property type="entry name" value="ATP_synt_c"/>
    <property type="match status" value="1"/>
</dbReference>
<dbReference type="NCBIfam" id="NF005608">
    <property type="entry name" value="PRK07354.1"/>
    <property type="match status" value="1"/>
</dbReference>
<dbReference type="PANTHER" id="PTHR10031">
    <property type="entry name" value="ATP SYNTHASE LIPID-BINDING PROTEIN, MITOCHONDRIAL"/>
    <property type="match status" value="1"/>
</dbReference>
<dbReference type="PANTHER" id="PTHR10031:SF0">
    <property type="entry name" value="ATPASE PROTEIN 9"/>
    <property type="match status" value="1"/>
</dbReference>
<dbReference type="Pfam" id="PF00137">
    <property type="entry name" value="ATP-synt_C"/>
    <property type="match status" value="1"/>
</dbReference>
<dbReference type="PRINTS" id="PR00124">
    <property type="entry name" value="ATPASEC"/>
</dbReference>
<dbReference type="SUPFAM" id="SSF81333">
    <property type="entry name" value="F1F0 ATP synthase subunit C"/>
    <property type="match status" value="1"/>
</dbReference>
<dbReference type="PROSITE" id="PS00605">
    <property type="entry name" value="ATPASE_C"/>
    <property type="match status" value="1"/>
</dbReference>